<gene>
    <name type="ordered locus">YPTS_2126</name>
</gene>
<reference key="1">
    <citation type="submission" date="2008-04" db="EMBL/GenBank/DDBJ databases">
        <title>Complete sequence of Yersinia pseudotuberculosis PB1/+.</title>
        <authorList>
            <person name="Copeland A."/>
            <person name="Lucas S."/>
            <person name="Lapidus A."/>
            <person name="Glavina del Rio T."/>
            <person name="Dalin E."/>
            <person name="Tice H."/>
            <person name="Bruce D."/>
            <person name="Goodwin L."/>
            <person name="Pitluck S."/>
            <person name="Munk A.C."/>
            <person name="Brettin T."/>
            <person name="Detter J.C."/>
            <person name="Han C."/>
            <person name="Tapia R."/>
            <person name="Schmutz J."/>
            <person name="Larimer F."/>
            <person name="Land M."/>
            <person name="Hauser L."/>
            <person name="Challacombe J.F."/>
            <person name="Green L."/>
            <person name="Lindler L.E."/>
            <person name="Nikolich M.P."/>
            <person name="Richardson P."/>
        </authorList>
    </citation>
    <scope>NUCLEOTIDE SEQUENCE [LARGE SCALE GENOMIC DNA]</scope>
    <source>
        <strain>PB1/+</strain>
    </source>
</reference>
<accession>B2K3P3</accession>
<comment type="similarity">
    <text evidence="1">Belongs to the UPF0260 family.</text>
</comment>
<feature type="chain" id="PRO_1000131643" description="UPF0260 protein YPTS_2126">
    <location>
        <begin position="1"/>
        <end position="148"/>
    </location>
</feature>
<proteinExistence type="inferred from homology"/>
<name>Y2126_YERPB</name>
<protein>
    <recommendedName>
        <fullName evidence="1">UPF0260 protein YPTS_2126</fullName>
    </recommendedName>
</protein>
<sequence>MSQPPFWQQKTLAEMSDSEWESLCDGCGQCCLNKLIDEDTDEIYFTNVACDQLNIKTCQCSNYERRFELEEDCIKLTRENLVTFAWLPPTCAYRLIGEGHDLPRWHPLLTGSKAAMHGERISVRHIAVRESEVVDWQDHILNKPSWAK</sequence>
<organism>
    <name type="scientific">Yersinia pseudotuberculosis serotype IB (strain PB1/+)</name>
    <dbReference type="NCBI Taxonomy" id="502801"/>
    <lineage>
        <taxon>Bacteria</taxon>
        <taxon>Pseudomonadati</taxon>
        <taxon>Pseudomonadota</taxon>
        <taxon>Gammaproteobacteria</taxon>
        <taxon>Enterobacterales</taxon>
        <taxon>Yersiniaceae</taxon>
        <taxon>Yersinia</taxon>
    </lineage>
</organism>
<evidence type="ECO:0000255" key="1">
    <source>
        <dbReference type="HAMAP-Rule" id="MF_00676"/>
    </source>
</evidence>
<dbReference type="EMBL" id="CP001048">
    <property type="protein sequence ID" value="ACC89089.1"/>
    <property type="molecule type" value="Genomic_DNA"/>
</dbReference>
<dbReference type="RefSeq" id="WP_002211739.1">
    <property type="nucleotide sequence ID" value="NZ_CP009780.1"/>
</dbReference>
<dbReference type="KEGG" id="ypb:YPTS_2126"/>
<dbReference type="PATRIC" id="fig|502801.10.peg.1516"/>
<dbReference type="HAMAP" id="MF_00676">
    <property type="entry name" value="UPF0260"/>
    <property type="match status" value="1"/>
</dbReference>
<dbReference type="InterPro" id="IPR005358">
    <property type="entry name" value="Puta_zinc/iron-chelating_dom"/>
</dbReference>
<dbReference type="InterPro" id="IPR008228">
    <property type="entry name" value="UCP006173"/>
</dbReference>
<dbReference type="NCBIfam" id="NF003498">
    <property type="entry name" value="PRK05170.1-1"/>
    <property type="match status" value="1"/>
</dbReference>
<dbReference type="NCBIfam" id="NF003501">
    <property type="entry name" value="PRK05170.1-5"/>
    <property type="match status" value="1"/>
</dbReference>
<dbReference type="NCBIfam" id="NF003507">
    <property type="entry name" value="PRK05170.2-5"/>
    <property type="match status" value="1"/>
</dbReference>
<dbReference type="PANTHER" id="PTHR37421">
    <property type="entry name" value="UPF0260 PROTEIN YCGN"/>
    <property type="match status" value="1"/>
</dbReference>
<dbReference type="PANTHER" id="PTHR37421:SF1">
    <property type="entry name" value="UPF0260 PROTEIN YCGN"/>
    <property type="match status" value="1"/>
</dbReference>
<dbReference type="Pfam" id="PF03692">
    <property type="entry name" value="CxxCxxCC"/>
    <property type="match status" value="1"/>
</dbReference>
<dbReference type="PIRSF" id="PIRSF006173">
    <property type="entry name" value="UCP006173"/>
    <property type="match status" value="1"/>
</dbReference>